<comment type="function">
    <text evidence="1">Cell wall formation. Catalyzes the transfer of a GlcNAc subunit on undecaprenyl-pyrophosphoryl-MurNAc-pentapeptide (lipid intermediate I) to form undecaprenyl-pyrophosphoryl-MurNAc-(pentapeptide)GlcNAc (lipid intermediate II).</text>
</comment>
<comment type="catalytic activity">
    <reaction evidence="1">
        <text>di-trans,octa-cis-undecaprenyl diphospho-N-acetyl-alpha-D-muramoyl-L-alanyl-D-glutamyl-meso-2,6-diaminopimeloyl-D-alanyl-D-alanine + UDP-N-acetyl-alpha-D-glucosamine = di-trans,octa-cis-undecaprenyl diphospho-[N-acetyl-alpha-D-glucosaminyl-(1-&gt;4)]-N-acetyl-alpha-D-muramoyl-L-alanyl-D-glutamyl-meso-2,6-diaminopimeloyl-D-alanyl-D-alanine + UDP + H(+)</text>
        <dbReference type="Rhea" id="RHEA:31227"/>
        <dbReference type="ChEBI" id="CHEBI:15378"/>
        <dbReference type="ChEBI" id="CHEBI:57705"/>
        <dbReference type="ChEBI" id="CHEBI:58223"/>
        <dbReference type="ChEBI" id="CHEBI:61387"/>
        <dbReference type="ChEBI" id="CHEBI:61388"/>
        <dbReference type="EC" id="2.4.1.227"/>
    </reaction>
</comment>
<comment type="pathway">
    <text evidence="1">Cell wall biogenesis; peptidoglycan biosynthesis.</text>
</comment>
<comment type="subcellular location">
    <subcellularLocation>
        <location evidence="1">Cell inner membrane</location>
        <topology evidence="1">Peripheral membrane protein</topology>
        <orientation evidence="1">Cytoplasmic side</orientation>
    </subcellularLocation>
</comment>
<comment type="similarity">
    <text evidence="1">Belongs to the glycosyltransferase 28 family. MurG subfamily.</text>
</comment>
<evidence type="ECO:0000255" key="1">
    <source>
        <dbReference type="HAMAP-Rule" id="MF_00033"/>
    </source>
</evidence>
<accession>A4SH02</accession>
<organism>
    <name type="scientific">Chlorobium phaeovibrioides (strain DSM 265 / 1930)</name>
    <name type="common">Prosthecochloris vibrioformis (strain DSM 265)</name>
    <dbReference type="NCBI Taxonomy" id="290318"/>
    <lineage>
        <taxon>Bacteria</taxon>
        <taxon>Pseudomonadati</taxon>
        <taxon>Chlorobiota</taxon>
        <taxon>Chlorobiia</taxon>
        <taxon>Chlorobiales</taxon>
        <taxon>Chlorobiaceae</taxon>
        <taxon>Chlorobium/Pelodictyon group</taxon>
        <taxon>Chlorobium</taxon>
    </lineage>
</organism>
<reference key="1">
    <citation type="submission" date="2007-03" db="EMBL/GenBank/DDBJ databases">
        <title>Complete sequence of Prosthecochloris vibrioformis DSM 265.</title>
        <authorList>
            <consortium name="US DOE Joint Genome Institute"/>
            <person name="Copeland A."/>
            <person name="Lucas S."/>
            <person name="Lapidus A."/>
            <person name="Barry K."/>
            <person name="Detter J.C."/>
            <person name="Glavina del Rio T."/>
            <person name="Hammon N."/>
            <person name="Israni S."/>
            <person name="Pitluck S."/>
            <person name="Schmutz J."/>
            <person name="Larimer F."/>
            <person name="Land M."/>
            <person name="Hauser L."/>
            <person name="Mikhailova N."/>
            <person name="Li T."/>
            <person name="Overmann J."/>
            <person name="Schuster S.C."/>
            <person name="Bryant D.A."/>
            <person name="Richardson P."/>
        </authorList>
    </citation>
    <scope>NUCLEOTIDE SEQUENCE [LARGE SCALE GENOMIC DNA]</scope>
    <source>
        <strain>DSM 265 / 1930</strain>
    </source>
</reference>
<proteinExistence type="inferred from homology"/>
<keyword id="KW-0131">Cell cycle</keyword>
<keyword id="KW-0132">Cell division</keyword>
<keyword id="KW-0997">Cell inner membrane</keyword>
<keyword id="KW-1003">Cell membrane</keyword>
<keyword id="KW-0133">Cell shape</keyword>
<keyword id="KW-0961">Cell wall biogenesis/degradation</keyword>
<keyword id="KW-0328">Glycosyltransferase</keyword>
<keyword id="KW-0472">Membrane</keyword>
<keyword id="KW-0573">Peptidoglycan synthesis</keyword>
<keyword id="KW-0808">Transferase</keyword>
<gene>
    <name evidence="1" type="primary">murG</name>
    <name type="ordered locus">Cvib_1753</name>
</gene>
<feature type="chain" id="PRO_1000074464" description="UDP-N-acetylglucosamine--N-acetylmuramyl-(pentapeptide) pyrophosphoryl-undecaprenol N-acetylglucosamine transferase">
    <location>
        <begin position="1"/>
        <end position="368"/>
    </location>
</feature>
<feature type="binding site" evidence="1">
    <location>
        <begin position="10"/>
        <end position="12"/>
    </location>
    <ligand>
        <name>UDP-N-acetyl-alpha-D-glucosamine</name>
        <dbReference type="ChEBI" id="CHEBI:57705"/>
    </ligand>
</feature>
<feature type="binding site" evidence="1">
    <location>
        <position position="128"/>
    </location>
    <ligand>
        <name>UDP-N-acetyl-alpha-D-glucosamine</name>
        <dbReference type="ChEBI" id="CHEBI:57705"/>
    </ligand>
</feature>
<feature type="binding site" evidence="1">
    <location>
        <position position="170"/>
    </location>
    <ligand>
        <name>UDP-N-acetyl-alpha-D-glucosamine</name>
        <dbReference type="ChEBI" id="CHEBI:57705"/>
    </ligand>
</feature>
<feature type="binding site" evidence="1">
    <location>
        <position position="199"/>
    </location>
    <ligand>
        <name>UDP-N-acetyl-alpha-D-glucosamine</name>
        <dbReference type="ChEBI" id="CHEBI:57705"/>
    </ligand>
</feature>
<feature type="binding site" evidence="1">
    <location>
        <position position="250"/>
    </location>
    <ligand>
        <name>UDP-N-acetyl-alpha-D-glucosamine</name>
        <dbReference type="ChEBI" id="CHEBI:57705"/>
    </ligand>
</feature>
<feature type="binding site" evidence="1">
    <location>
        <position position="295"/>
    </location>
    <ligand>
        <name>UDP-N-acetyl-alpha-D-glucosamine</name>
        <dbReference type="ChEBI" id="CHEBI:57705"/>
    </ligand>
</feature>
<sequence length="368" mass="38937">MNILFAGGGTGGHLYPAVAMAEEVQRMVPGASVLFAGTSRGIEAREVPRLGYRLHLLEVRGLRRGRSLKDMAANIGIAADFAAALASAVALVRRERPDVVVGTGGFVSAPVLFAAQLLGKKTLIQEQNAFPGVTTRLLSALATEVHLSFAEAARYLPKQKGVMVSGNPARSFTQVDASAAREHFGLDPSRPTLLVFGGSRGARSINNAVLRHHDLFCAAANLLWQTGSVDFERIRDACPPSRHLQIVPYIEEMGVAYSASDLVLCRAGASSIAELTNLAKPSVLVPYPYATGDHQRHNARALVHSGAAEVIEDSVLDSEESAAAIMELLHDGARRSAMSEAAGRLGAPDAARHLALRIISLAGTKQGS</sequence>
<protein>
    <recommendedName>
        <fullName evidence="1">UDP-N-acetylglucosamine--N-acetylmuramyl-(pentapeptide) pyrophosphoryl-undecaprenol N-acetylglucosamine transferase</fullName>
        <ecNumber evidence="1">2.4.1.227</ecNumber>
    </recommendedName>
    <alternativeName>
        <fullName evidence="1">Undecaprenyl-PP-MurNAc-pentapeptide-UDPGlcNAc GlcNAc transferase</fullName>
    </alternativeName>
</protein>
<name>MURG_CHLPM</name>
<dbReference type="EC" id="2.4.1.227" evidence="1"/>
<dbReference type="EMBL" id="CP000607">
    <property type="protein sequence ID" value="ABP37761.1"/>
    <property type="molecule type" value="Genomic_DNA"/>
</dbReference>
<dbReference type="SMR" id="A4SH02"/>
<dbReference type="STRING" id="290318.Cvib_1753"/>
<dbReference type="CAZy" id="GT28">
    <property type="family name" value="Glycosyltransferase Family 28"/>
</dbReference>
<dbReference type="KEGG" id="pvi:Cvib_1753"/>
<dbReference type="eggNOG" id="COG0707">
    <property type="taxonomic scope" value="Bacteria"/>
</dbReference>
<dbReference type="HOGENOM" id="CLU_037404_0_1_10"/>
<dbReference type="OrthoDB" id="9808936at2"/>
<dbReference type="UniPathway" id="UPA00219"/>
<dbReference type="GO" id="GO:0005886">
    <property type="term" value="C:plasma membrane"/>
    <property type="evidence" value="ECO:0007669"/>
    <property type="project" value="UniProtKB-SubCell"/>
</dbReference>
<dbReference type="GO" id="GO:0051991">
    <property type="term" value="F:UDP-N-acetyl-D-glucosamine:N-acetylmuramoyl-L-alanyl-D-glutamyl-meso-2,6-diaminopimelyl-D-alanyl-D-alanine-diphosphoundecaprenol 4-beta-N-acetylglucosaminlytransferase activity"/>
    <property type="evidence" value="ECO:0007669"/>
    <property type="project" value="RHEA"/>
</dbReference>
<dbReference type="GO" id="GO:0050511">
    <property type="term" value="F:undecaprenyldiphospho-muramoylpentapeptide beta-N-acetylglucosaminyltransferase activity"/>
    <property type="evidence" value="ECO:0007669"/>
    <property type="project" value="UniProtKB-UniRule"/>
</dbReference>
<dbReference type="GO" id="GO:0005975">
    <property type="term" value="P:carbohydrate metabolic process"/>
    <property type="evidence" value="ECO:0007669"/>
    <property type="project" value="InterPro"/>
</dbReference>
<dbReference type="GO" id="GO:0051301">
    <property type="term" value="P:cell division"/>
    <property type="evidence" value="ECO:0007669"/>
    <property type="project" value="UniProtKB-KW"/>
</dbReference>
<dbReference type="GO" id="GO:0071555">
    <property type="term" value="P:cell wall organization"/>
    <property type="evidence" value="ECO:0007669"/>
    <property type="project" value="UniProtKB-KW"/>
</dbReference>
<dbReference type="GO" id="GO:0030259">
    <property type="term" value="P:lipid glycosylation"/>
    <property type="evidence" value="ECO:0007669"/>
    <property type="project" value="UniProtKB-UniRule"/>
</dbReference>
<dbReference type="GO" id="GO:0009252">
    <property type="term" value="P:peptidoglycan biosynthetic process"/>
    <property type="evidence" value="ECO:0007669"/>
    <property type="project" value="UniProtKB-UniRule"/>
</dbReference>
<dbReference type="GO" id="GO:0008360">
    <property type="term" value="P:regulation of cell shape"/>
    <property type="evidence" value="ECO:0007669"/>
    <property type="project" value="UniProtKB-KW"/>
</dbReference>
<dbReference type="CDD" id="cd03785">
    <property type="entry name" value="GT28_MurG"/>
    <property type="match status" value="1"/>
</dbReference>
<dbReference type="Gene3D" id="3.40.50.2000">
    <property type="entry name" value="Glycogen Phosphorylase B"/>
    <property type="match status" value="2"/>
</dbReference>
<dbReference type="HAMAP" id="MF_00033">
    <property type="entry name" value="MurG"/>
    <property type="match status" value="1"/>
</dbReference>
<dbReference type="InterPro" id="IPR006009">
    <property type="entry name" value="GlcNAc_MurG"/>
</dbReference>
<dbReference type="InterPro" id="IPR007235">
    <property type="entry name" value="Glyco_trans_28_C"/>
</dbReference>
<dbReference type="InterPro" id="IPR004276">
    <property type="entry name" value="GlycoTrans_28_N"/>
</dbReference>
<dbReference type="NCBIfam" id="TIGR01133">
    <property type="entry name" value="murG"/>
    <property type="match status" value="1"/>
</dbReference>
<dbReference type="PANTHER" id="PTHR21015:SF22">
    <property type="entry name" value="GLYCOSYLTRANSFERASE"/>
    <property type="match status" value="1"/>
</dbReference>
<dbReference type="PANTHER" id="PTHR21015">
    <property type="entry name" value="UDP-N-ACETYLGLUCOSAMINE--N-ACETYLMURAMYL-(PENTAPEPTIDE) PYROPHOSPHORYL-UNDECAPRENOL N-ACETYLGLUCOSAMINE TRANSFERASE 1"/>
    <property type="match status" value="1"/>
</dbReference>
<dbReference type="Pfam" id="PF04101">
    <property type="entry name" value="Glyco_tran_28_C"/>
    <property type="match status" value="1"/>
</dbReference>
<dbReference type="Pfam" id="PF03033">
    <property type="entry name" value="Glyco_transf_28"/>
    <property type="match status" value="1"/>
</dbReference>
<dbReference type="SUPFAM" id="SSF53756">
    <property type="entry name" value="UDP-Glycosyltransferase/glycogen phosphorylase"/>
    <property type="match status" value="1"/>
</dbReference>